<gene>
    <name evidence="1" type="primary">tsf</name>
    <name type="ordered locus">Bcen_6059</name>
</gene>
<sequence>MAAITASMVAELRAKTDAPMMECKKALTEADGDLAKAEELLRVKLGNKASKAASRVTAEGVVASFVGGNAGALVELNCETDFVAKNDDFLAFSKTVAELVATQNPADVAALSALPLEGSTVDAVRLALIGKIGENVSIRRFVRFETANKIATYLHGARIGVIVEYTGAEEQVGKDVAMHIAAMKPVALSSADVPAELIDTERRVAEQKAAESGKPAEIVAKMVDGSVQKYLKEVSLLNQTFVKNDKQTIEQMLKAANATVQKFALFVVGEGIEKRQDDFAAEVAAQVAAAKQQ</sequence>
<accession>Q1BHI1</accession>
<evidence type="ECO:0000255" key="1">
    <source>
        <dbReference type="HAMAP-Rule" id="MF_00050"/>
    </source>
</evidence>
<reference key="1">
    <citation type="submission" date="2006-05" db="EMBL/GenBank/DDBJ databases">
        <title>Complete sequence of chromosome 3 of Burkholderia cenocepacia AU 1054.</title>
        <authorList>
            <consortium name="US DOE Joint Genome Institute"/>
            <person name="Copeland A."/>
            <person name="Lucas S."/>
            <person name="Lapidus A."/>
            <person name="Barry K."/>
            <person name="Detter J.C."/>
            <person name="Glavina del Rio T."/>
            <person name="Hammon N."/>
            <person name="Israni S."/>
            <person name="Dalin E."/>
            <person name="Tice H."/>
            <person name="Pitluck S."/>
            <person name="Chain P."/>
            <person name="Malfatti S."/>
            <person name="Shin M."/>
            <person name="Vergez L."/>
            <person name="Schmutz J."/>
            <person name="Larimer F."/>
            <person name="Land M."/>
            <person name="Hauser L."/>
            <person name="Kyrpides N."/>
            <person name="Lykidis A."/>
            <person name="LiPuma J.J."/>
            <person name="Konstantinidis K."/>
            <person name="Tiedje J.M."/>
            <person name="Richardson P."/>
        </authorList>
    </citation>
    <scope>NUCLEOTIDE SEQUENCE [LARGE SCALE GENOMIC DNA]</scope>
    <source>
        <strain>AU 1054</strain>
    </source>
</reference>
<name>EFTS_BURO1</name>
<comment type="function">
    <text evidence="1">Associates with the EF-Tu.GDP complex and induces the exchange of GDP to GTP. It remains bound to the aminoacyl-tRNA.EF-Tu.GTP complex up to the GTP hydrolysis stage on the ribosome.</text>
</comment>
<comment type="subcellular location">
    <subcellularLocation>
        <location evidence="1">Cytoplasm</location>
    </subcellularLocation>
</comment>
<comment type="similarity">
    <text evidence="1">Belongs to the EF-Ts family.</text>
</comment>
<protein>
    <recommendedName>
        <fullName evidence="1">Elongation factor Ts</fullName>
        <shortName evidence="1">EF-Ts</shortName>
    </recommendedName>
</protein>
<keyword id="KW-0963">Cytoplasm</keyword>
<keyword id="KW-0251">Elongation factor</keyword>
<keyword id="KW-0648">Protein biosynthesis</keyword>
<proteinExistence type="inferred from homology"/>
<organism>
    <name type="scientific">Burkholderia orbicola (strain AU 1054)</name>
    <dbReference type="NCBI Taxonomy" id="331271"/>
    <lineage>
        <taxon>Bacteria</taxon>
        <taxon>Pseudomonadati</taxon>
        <taxon>Pseudomonadota</taxon>
        <taxon>Betaproteobacteria</taxon>
        <taxon>Burkholderiales</taxon>
        <taxon>Burkholderiaceae</taxon>
        <taxon>Burkholderia</taxon>
        <taxon>Burkholderia cepacia complex</taxon>
        <taxon>Burkholderia orbicola</taxon>
    </lineage>
</organism>
<feature type="chain" id="PRO_1000006061" description="Elongation factor Ts">
    <location>
        <begin position="1"/>
        <end position="293"/>
    </location>
</feature>
<feature type="region of interest" description="Involved in Mg(2+) ion dislocation from EF-Tu" evidence="1">
    <location>
        <begin position="80"/>
        <end position="83"/>
    </location>
</feature>
<dbReference type="EMBL" id="CP000380">
    <property type="protein sequence ID" value="ABF80924.1"/>
    <property type="molecule type" value="Genomic_DNA"/>
</dbReference>
<dbReference type="SMR" id="Q1BHI1"/>
<dbReference type="HOGENOM" id="CLU_047155_0_2_4"/>
<dbReference type="GO" id="GO:0005737">
    <property type="term" value="C:cytoplasm"/>
    <property type="evidence" value="ECO:0007669"/>
    <property type="project" value="UniProtKB-SubCell"/>
</dbReference>
<dbReference type="GO" id="GO:0003746">
    <property type="term" value="F:translation elongation factor activity"/>
    <property type="evidence" value="ECO:0007669"/>
    <property type="project" value="UniProtKB-UniRule"/>
</dbReference>
<dbReference type="CDD" id="cd14275">
    <property type="entry name" value="UBA_EF-Ts"/>
    <property type="match status" value="1"/>
</dbReference>
<dbReference type="FunFam" id="1.10.286.20:FF:000001">
    <property type="entry name" value="Elongation factor Ts"/>
    <property type="match status" value="1"/>
</dbReference>
<dbReference type="FunFam" id="1.10.8.10:FF:000001">
    <property type="entry name" value="Elongation factor Ts"/>
    <property type="match status" value="1"/>
</dbReference>
<dbReference type="Gene3D" id="1.10.286.20">
    <property type="match status" value="1"/>
</dbReference>
<dbReference type="Gene3D" id="1.10.8.10">
    <property type="entry name" value="DNA helicase RuvA subunit, C-terminal domain"/>
    <property type="match status" value="1"/>
</dbReference>
<dbReference type="Gene3D" id="3.30.479.20">
    <property type="entry name" value="Elongation factor Ts, dimerisation domain"/>
    <property type="match status" value="2"/>
</dbReference>
<dbReference type="HAMAP" id="MF_00050">
    <property type="entry name" value="EF_Ts"/>
    <property type="match status" value="1"/>
</dbReference>
<dbReference type="InterPro" id="IPR036402">
    <property type="entry name" value="EF-Ts_dimer_sf"/>
</dbReference>
<dbReference type="InterPro" id="IPR001816">
    <property type="entry name" value="Transl_elong_EFTs/EF1B"/>
</dbReference>
<dbReference type="InterPro" id="IPR014039">
    <property type="entry name" value="Transl_elong_EFTs/EF1B_dimer"/>
</dbReference>
<dbReference type="InterPro" id="IPR018101">
    <property type="entry name" value="Transl_elong_Ts_CS"/>
</dbReference>
<dbReference type="InterPro" id="IPR009060">
    <property type="entry name" value="UBA-like_sf"/>
</dbReference>
<dbReference type="NCBIfam" id="TIGR00116">
    <property type="entry name" value="tsf"/>
    <property type="match status" value="1"/>
</dbReference>
<dbReference type="PANTHER" id="PTHR11741">
    <property type="entry name" value="ELONGATION FACTOR TS"/>
    <property type="match status" value="1"/>
</dbReference>
<dbReference type="PANTHER" id="PTHR11741:SF0">
    <property type="entry name" value="ELONGATION FACTOR TS, MITOCHONDRIAL"/>
    <property type="match status" value="1"/>
</dbReference>
<dbReference type="Pfam" id="PF00889">
    <property type="entry name" value="EF_TS"/>
    <property type="match status" value="1"/>
</dbReference>
<dbReference type="SUPFAM" id="SSF54713">
    <property type="entry name" value="Elongation factor Ts (EF-Ts), dimerisation domain"/>
    <property type="match status" value="2"/>
</dbReference>
<dbReference type="SUPFAM" id="SSF46934">
    <property type="entry name" value="UBA-like"/>
    <property type="match status" value="1"/>
</dbReference>
<dbReference type="PROSITE" id="PS01127">
    <property type="entry name" value="EF_TS_2"/>
    <property type="match status" value="1"/>
</dbReference>